<sequence>MKVKNTIAATSFAAAGLAALAVAVSPPAAAGDLVGPGCAEYAAANPTGPASVQGMSQDPVAVAASNNPELTTLTAALSGQLNPQVNLVDTLNSGQYTVFAPTNAAFSKLPASTIDELKTNSSLLTSILTYHVVAGQTSPANVVGTRQTLQGASVTVTGQGNSLKVGNADVVCGGVSTANATVYMIDSVLMPPA</sequence>
<organism>
    <name type="scientific">Mycobacterium tuberculosis (strain CDC 1551 / Oshkosh)</name>
    <dbReference type="NCBI Taxonomy" id="83331"/>
    <lineage>
        <taxon>Bacteria</taxon>
        <taxon>Bacillati</taxon>
        <taxon>Actinomycetota</taxon>
        <taxon>Actinomycetes</taxon>
        <taxon>Mycobacteriales</taxon>
        <taxon>Mycobacteriaceae</taxon>
        <taxon>Mycobacterium</taxon>
        <taxon>Mycobacterium tuberculosis complex</taxon>
    </lineage>
</organism>
<proteinExistence type="inferred from homology"/>
<name>MP70_MYCTO</name>
<keyword id="KW-1185">Reference proteome</keyword>
<keyword id="KW-0964">Secreted</keyword>
<keyword id="KW-0732">Signal</keyword>
<feature type="signal peptide" evidence="1">
    <location>
        <begin position="1"/>
        <end position="30"/>
    </location>
</feature>
<feature type="chain" id="PRO_0000427136" description="Immunogenic protein MPT70">
    <location>
        <begin position="31"/>
        <end position="193"/>
    </location>
</feature>
<feature type="domain" description="FAS1" evidence="2">
    <location>
        <begin position="57"/>
        <end position="189"/>
    </location>
</feature>
<accession>P9WNF4</accession>
<accession>L0TDT6</accession>
<accession>P0A668</accession>
<accession>Q48934</accession>
<accession>Q48946</accession>
<accession>Q48947</accession>
<accession>Q48948</accession>
<accession>Q50656</accession>
<accession>Q50769</accession>
<evidence type="ECO:0000250" key="1"/>
<evidence type="ECO:0000255" key="2">
    <source>
        <dbReference type="PROSITE-ProRule" id="PRU00082"/>
    </source>
</evidence>
<protein>
    <recommendedName>
        <fullName>Immunogenic protein MPT70</fullName>
    </recommendedName>
</protein>
<comment type="subunit">
    <text evidence="1">Generally found as a monomer; homodimer in culture fluids.</text>
</comment>
<comment type="subcellular location">
    <subcellularLocation>
        <location evidence="1">Secreted</location>
    </subcellularLocation>
</comment>
<gene>
    <name type="primary">mpt70</name>
    <name type="ordered locus">MT2943</name>
</gene>
<reference key="1">
    <citation type="journal article" date="2002" name="J. Bacteriol.">
        <title>Whole-genome comparison of Mycobacterium tuberculosis clinical and laboratory strains.</title>
        <authorList>
            <person name="Fleischmann R.D."/>
            <person name="Alland D."/>
            <person name="Eisen J.A."/>
            <person name="Carpenter L."/>
            <person name="White O."/>
            <person name="Peterson J.D."/>
            <person name="DeBoy R.T."/>
            <person name="Dodson R.J."/>
            <person name="Gwinn M.L."/>
            <person name="Haft D.H."/>
            <person name="Hickey E.K."/>
            <person name="Kolonay J.F."/>
            <person name="Nelson W.C."/>
            <person name="Umayam L.A."/>
            <person name="Ermolaeva M.D."/>
            <person name="Salzberg S.L."/>
            <person name="Delcher A."/>
            <person name="Utterback T.R."/>
            <person name="Weidman J.F."/>
            <person name="Khouri H.M."/>
            <person name="Gill J."/>
            <person name="Mikula A."/>
            <person name="Bishai W."/>
            <person name="Jacobs W.R. Jr."/>
            <person name="Venter J.C."/>
            <person name="Fraser C.M."/>
        </authorList>
    </citation>
    <scope>NUCLEOTIDE SEQUENCE [LARGE SCALE GENOMIC DNA]</scope>
    <source>
        <strain>CDC 1551 / Oshkosh</strain>
    </source>
</reference>
<dbReference type="EMBL" id="AE000516">
    <property type="protein sequence ID" value="AAK47268.1"/>
    <property type="molecule type" value="Genomic_DNA"/>
</dbReference>
<dbReference type="PIR" id="F70923">
    <property type="entry name" value="F70923"/>
</dbReference>
<dbReference type="RefSeq" id="WP_003414644.1">
    <property type="nucleotide sequence ID" value="NZ_KK341227.1"/>
</dbReference>
<dbReference type="SMR" id="P9WNF4"/>
<dbReference type="KEGG" id="mtc:MT2943"/>
<dbReference type="PATRIC" id="fig|83331.31.peg.3180"/>
<dbReference type="HOGENOM" id="CLU_031281_3_0_11"/>
<dbReference type="Proteomes" id="UP000001020">
    <property type="component" value="Chromosome"/>
</dbReference>
<dbReference type="GO" id="GO:0031012">
    <property type="term" value="C:extracellular matrix"/>
    <property type="evidence" value="ECO:0007669"/>
    <property type="project" value="TreeGrafter"/>
</dbReference>
<dbReference type="GO" id="GO:0005615">
    <property type="term" value="C:extracellular space"/>
    <property type="evidence" value="ECO:0007669"/>
    <property type="project" value="TreeGrafter"/>
</dbReference>
<dbReference type="GO" id="GO:0050839">
    <property type="term" value="F:cell adhesion molecule binding"/>
    <property type="evidence" value="ECO:0007669"/>
    <property type="project" value="TreeGrafter"/>
</dbReference>
<dbReference type="GO" id="GO:0007155">
    <property type="term" value="P:cell adhesion"/>
    <property type="evidence" value="ECO:0007669"/>
    <property type="project" value="TreeGrafter"/>
</dbReference>
<dbReference type="GO" id="GO:0030198">
    <property type="term" value="P:extracellular matrix organization"/>
    <property type="evidence" value="ECO:0007669"/>
    <property type="project" value="TreeGrafter"/>
</dbReference>
<dbReference type="FunFam" id="2.30.180.10:FF:000019">
    <property type="entry name" value="Cell surface lipoprotein"/>
    <property type="match status" value="1"/>
</dbReference>
<dbReference type="Gene3D" id="2.30.180.10">
    <property type="entry name" value="FAS1 domain"/>
    <property type="match status" value="1"/>
</dbReference>
<dbReference type="InterPro" id="IPR050904">
    <property type="entry name" value="Adhesion/Biosynth-related"/>
</dbReference>
<dbReference type="InterPro" id="IPR036378">
    <property type="entry name" value="FAS1_dom_sf"/>
</dbReference>
<dbReference type="InterPro" id="IPR000782">
    <property type="entry name" value="FAS1_domain"/>
</dbReference>
<dbReference type="PANTHER" id="PTHR10900:SF77">
    <property type="entry name" value="FI19380P1"/>
    <property type="match status" value="1"/>
</dbReference>
<dbReference type="PANTHER" id="PTHR10900">
    <property type="entry name" value="PERIOSTIN-RELATED"/>
    <property type="match status" value="1"/>
</dbReference>
<dbReference type="Pfam" id="PF02469">
    <property type="entry name" value="Fasciclin"/>
    <property type="match status" value="1"/>
</dbReference>
<dbReference type="SMART" id="SM00554">
    <property type="entry name" value="FAS1"/>
    <property type="match status" value="1"/>
</dbReference>
<dbReference type="SUPFAM" id="SSF82153">
    <property type="entry name" value="FAS1 domain"/>
    <property type="match status" value="1"/>
</dbReference>
<dbReference type="PROSITE" id="PS50213">
    <property type="entry name" value="FAS1"/>
    <property type="match status" value="1"/>
</dbReference>